<protein>
    <recommendedName>
        <fullName evidence="2">Small ribosomal subunit protein uS19</fullName>
    </recommendedName>
    <alternativeName>
        <fullName>30S ribosomal protein S19</fullName>
    </alternativeName>
</protein>
<sequence>MGRSLKKGPFVDDHLMKKIETLNESNDKKVVKTWSRRSTIFPEFVGHTIAVYDGRKHVPVYISEDMVGHKLGEFAPTRTYKGHAADDKKTRR</sequence>
<evidence type="ECO:0000250" key="1"/>
<evidence type="ECO:0000305" key="2"/>
<comment type="function">
    <text evidence="1">Protein S19 forms a complex with S13 that binds strongly to the 16S ribosomal RNA.</text>
</comment>
<comment type="similarity">
    <text evidence="2">Belongs to the universal ribosomal protein uS19 family.</text>
</comment>
<name>RS19_HALH5</name>
<dbReference type="EMBL" id="AB017508">
    <property type="protein sequence ID" value="BAA75275.1"/>
    <property type="molecule type" value="Genomic_DNA"/>
</dbReference>
<dbReference type="EMBL" id="BA000004">
    <property type="protein sequence ID" value="BAB03857.1"/>
    <property type="molecule type" value="Genomic_DNA"/>
</dbReference>
<dbReference type="PIR" id="T44387">
    <property type="entry name" value="T44387"/>
</dbReference>
<dbReference type="RefSeq" id="WP_010896321.1">
    <property type="nucleotide sequence ID" value="NC_002570.2"/>
</dbReference>
<dbReference type="SMR" id="Q9Z9L0"/>
<dbReference type="STRING" id="272558.gene:10725978"/>
<dbReference type="GeneID" id="87595679"/>
<dbReference type="KEGG" id="bha:BH0138"/>
<dbReference type="eggNOG" id="COG0185">
    <property type="taxonomic scope" value="Bacteria"/>
</dbReference>
<dbReference type="HOGENOM" id="CLU_144911_0_1_9"/>
<dbReference type="OrthoDB" id="9797833at2"/>
<dbReference type="Proteomes" id="UP000001258">
    <property type="component" value="Chromosome"/>
</dbReference>
<dbReference type="GO" id="GO:0005737">
    <property type="term" value="C:cytoplasm"/>
    <property type="evidence" value="ECO:0007669"/>
    <property type="project" value="UniProtKB-ARBA"/>
</dbReference>
<dbReference type="GO" id="GO:0015935">
    <property type="term" value="C:small ribosomal subunit"/>
    <property type="evidence" value="ECO:0007669"/>
    <property type="project" value="InterPro"/>
</dbReference>
<dbReference type="GO" id="GO:0019843">
    <property type="term" value="F:rRNA binding"/>
    <property type="evidence" value="ECO:0007669"/>
    <property type="project" value="UniProtKB-UniRule"/>
</dbReference>
<dbReference type="GO" id="GO:0003735">
    <property type="term" value="F:structural constituent of ribosome"/>
    <property type="evidence" value="ECO:0007669"/>
    <property type="project" value="InterPro"/>
</dbReference>
<dbReference type="GO" id="GO:0000028">
    <property type="term" value="P:ribosomal small subunit assembly"/>
    <property type="evidence" value="ECO:0007669"/>
    <property type="project" value="TreeGrafter"/>
</dbReference>
<dbReference type="GO" id="GO:0006412">
    <property type="term" value="P:translation"/>
    <property type="evidence" value="ECO:0007669"/>
    <property type="project" value="UniProtKB-UniRule"/>
</dbReference>
<dbReference type="FunFam" id="3.30.860.10:FF:000001">
    <property type="entry name" value="30S ribosomal protein S19"/>
    <property type="match status" value="1"/>
</dbReference>
<dbReference type="Gene3D" id="3.30.860.10">
    <property type="entry name" value="30s Ribosomal Protein S19, Chain A"/>
    <property type="match status" value="1"/>
</dbReference>
<dbReference type="HAMAP" id="MF_00531">
    <property type="entry name" value="Ribosomal_uS19"/>
    <property type="match status" value="1"/>
</dbReference>
<dbReference type="InterPro" id="IPR002222">
    <property type="entry name" value="Ribosomal_uS19"/>
</dbReference>
<dbReference type="InterPro" id="IPR005732">
    <property type="entry name" value="Ribosomal_uS19_bac-type"/>
</dbReference>
<dbReference type="InterPro" id="IPR020934">
    <property type="entry name" value="Ribosomal_uS19_CS"/>
</dbReference>
<dbReference type="InterPro" id="IPR023575">
    <property type="entry name" value="Ribosomal_uS19_SF"/>
</dbReference>
<dbReference type="NCBIfam" id="TIGR01050">
    <property type="entry name" value="rpsS_bact"/>
    <property type="match status" value="1"/>
</dbReference>
<dbReference type="PANTHER" id="PTHR11880">
    <property type="entry name" value="RIBOSOMAL PROTEIN S19P FAMILY MEMBER"/>
    <property type="match status" value="1"/>
</dbReference>
<dbReference type="PANTHER" id="PTHR11880:SF8">
    <property type="entry name" value="SMALL RIBOSOMAL SUBUNIT PROTEIN US19M"/>
    <property type="match status" value="1"/>
</dbReference>
<dbReference type="Pfam" id="PF00203">
    <property type="entry name" value="Ribosomal_S19"/>
    <property type="match status" value="1"/>
</dbReference>
<dbReference type="PIRSF" id="PIRSF002144">
    <property type="entry name" value="Ribosomal_S19"/>
    <property type="match status" value="1"/>
</dbReference>
<dbReference type="PRINTS" id="PR00975">
    <property type="entry name" value="RIBOSOMALS19"/>
</dbReference>
<dbReference type="SUPFAM" id="SSF54570">
    <property type="entry name" value="Ribosomal protein S19"/>
    <property type="match status" value="1"/>
</dbReference>
<dbReference type="PROSITE" id="PS00323">
    <property type="entry name" value="RIBOSOMAL_S19"/>
    <property type="match status" value="1"/>
</dbReference>
<feature type="chain" id="PRO_0000129776" description="Small ribosomal subunit protein uS19">
    <location>
        <begin position="1"/>
        <end position="92"/>
    </location>
</feature>
<reference key="1">
    <citation type="journal article" date="1999" name="Biosci. Biotechnol. Biochem.">
        <title>Sequence analysis of a 32-kb region including the major ribosomal protein gene clusters from alkaliphilic Bacillus sp. strain C-125.</title>
        <authorList>
            <person name="Takami H."/>
            <person name="Takaki Y."/>
            <person name="Nakasone K."/>
            <person name="Hirama C."/>
            <person name="Inoue A."/>
            <person name="Horikoshi K."/>
        </authorList>
    </citation>
    <scope>NUCLEOTIDE SEQUENCE [GENOMIC DNA]</scope>
    <source>
        <strain>ATCC BAA-125 / DSM 18197 / FERM 7344 / JCM 9153 / C-125</strain>
    </source>
</reference>
<reference key="2">
    <citation type="journal article" date="2000" name="Nucleic Acids Res.">
        <title>Complete genome sequence of the alkaliphilic bacterium Bacillus halodurans and genomic sequence comparison with Bacillus subtilis.</title>
        <authorList>
            <person name="Takami H."/>
            <person name="Nakasone K."/>
            <person name="Takaki Y."/>
            <person name="Maeno G."/>
            <person name="Sasaki R."/>
            <person name="Masui N."/>
            <person name="Fuji F."/>
            <person name="Hirama C."/>
            <person name="Nakamura Y."/>
            <person name="Ogasawara N."/>
            <person name="Kuhara S."/>
            <person name="Horikoshi K."/>
        </authorList>
    </citation>
    <scope>NUCLEOTIDE SEQUENCE [LARGE SCALE GENOMIC DNA]</scope>
    <source>
        <strain>ATCC BAA-125 / DSM 18197 / FERM 7344 / JCM 9153 / C-125</strain>
    </source>
</reference>
<organism>
    <name type="scientific">Halalkalibacterium halodurans (strain ATCC BAA-125 / DSM 18197 / FERM 7344 / JCM 9153 / C-125)</name>
    <name type="common">Bacillus halodurans</name>
    <dbReference type="NCBI Taxonomy" id="272558"/>
    <lineage>
        <taxon>Bacteria</taxon>
        <taxon>Bacillati</taxon>
        <taxon>Bacillota</taxon>
        <taxon>Bacilli</taxon>
        <taxon>Bacillales</taxon>
        <taxon>Bacillaceae</taxon>
        <taxon>Halalkalibacterium (ex Joshi et al. 2022)</taxon>
    </lineage>
</organism>
<keyword id="KW-1185">Reference proteome</keyword>
<keyword id="KW-0687">Ribonucleoprotein</keyword>
<keyword id="KW-0689">Ribosomal protein</keyword>
<keyword id="KW-0694">RNA-binding</keyword>
<keyword id="KW-0699">rRNA-binding</keyword>
<accession>Q9Z9L0</accession>
<accession>Q9JPY2</accession>
<proteinExistence type="inferred from homology"/>
<gene>
    <name type="primary">rpsS</name>
    <name type="ordered locus">BH0138</name>
</gene>